<keyword id="KW-0028">Amino-acid biosynthesis</keyword>
<keyword id="KW-0963">Cytoplasm</keyword>
<keyword id="KW-0220">Diaminopimelate biosynthesis</keyword>
<keyword id="KW-0456">Lyase</keyword>
<keyword id="KW-0457">Lysine biosynthesis</keyword>
<keyword id="KW-0704">Schiff base</keyword>
<evidence type="ECO:0000255" key="1">
    <source>
        <dbReference type="HAMAP-Rule" id="MF_00418"/>
    </source>
</evidence>
<evidence type="ECO:0000305" key="2"/>
<accession>A4WNS1</accession>
<sequence>MIRGSIPALVTPFKNGELDLDTLKKLVDWQIAEGSTGLVPVGTTGESPTLSHEEHETVIEAVVQAAAGRVPVIAGAGSNSTTEGIRLIRFAERVGADAALVVTPYYNKPTQAGLMAHFTALHDCCNLPIVIYNIPGRSVVDMTPETMGRLAQLPRIIGVKDATGKIERVSQQRASCGAEFLQLSGEDATALGFNAHGGVGCISVTANVAPRLCAEFQQATLRGDYATALEYQDRLMPLHEAIFLEPGLVGAKYALSQLGLCSDEVRLPLVGLTDPTKARIDAAMRHAGLI</sequence>
<feature type="chain" id="PRO_1000050254" description="4-hydroxy-tetrahydrodipicolinate synthase">
    <location>
        <begin position="1"/>
        <end position="290"/>
    </location>
</feature>
<feature type="active site" description="Proton donor/acceptor" evidence="1">
    <location>
        <position position="132"/>
    </location>
</feature>
<feature type="active site" description="Schiff-base intermediate with substrate" evidence="1">
    <location>
        <position position="160"/>
    </location>
</feature>
<feature type="binding site" evidence="1">
    <location>
        <position position="44"/>
    </location>
    <ligand>
        <name>pyruvate</name>
        <dbReference type="ChEBI" id="CHEBI:15361"/>
    </ligand>
</feature>
<feature type="binding site" evidence="1">
    <location>
        <position position="202"/>
    </location>
    <ligand>
        <name>pyruvate</name>
        <dbReference type="ChEBI" id="CHEBI:15361"/>
    </ligand>
</feature>
<feature type="site" description="Part of a proton relay during catalysis" evidence="1">
    <location>
        <position position="43"/>
    </location>
</feature>
<feature type="site" description="Part of a proton relay during catalysis" evidence="1">
    <location>
        <position position="106"/>
    </location>
</feature>
<organism>
    <name type="scientific">Cereibacter sphaeroides (strain ATCC 17025 / ATH 2.4.3)</name>
    <name type="common">Rhodobacter sphaeroides</name>
    <dbReference type="NCBI Taxonomy" id="349102"/>
    <lineage>
        <taxon>Bacteria</taxon>
        <taxon>Pseudomonadati</taxon>
        <taxon>Pseudomonadota</taxon>
        <taxon>Alphaproteobacteria</taxon>
        <taxon>Rhodobacterales</taxon>
        <taxon>Paracoccaceae</taxon>
        <taxon>Cereibacter</taxon>
    </lineage>
</organism>
<proteinExistence type="inferred from homology"/>
<dbReference type="EC" id="4.3.3.7" evidence="1"/>
<dbReference type="EMBL" id="CP000661">
    <property type="protein sequence ID" value="ABP69035.1"/>
    <property type="molecule type" value="Genomic_DNA"/>
</dbReference>
<dbReference type="SMR" id="A4WNS1"/>
<dbReference type="STRING" id="349102.Rsph17025_0124"/>
<dbReference type="KEGG" id="rsq:Rsph17025_0124"/>
<dbReference type="eggNOG" id="COG0329">
    <property type="taxonomic scope" value="Bacteria"/>
</dbReference>
<dbReference type="HOGENOM" id="CLU_049343_7_1_5"/>
<dbReference type="BioCyc" id="RSPH349102:G1G8M-125-MONOMER"/>
<dbReference type="UniPathway" id="UPA00034">
    <property type="reaction ID" value="UER00017"/>
</dbReference>
<dbReference type="GO" id="GO:0005829">
    <property type="term" value="C:cytosol"/>
    <property type="evidence" value="ECO:0007669"/>
    <property type="project" value="TreeGrafter"/>
</dbReference>
<dbReference type="GO" id="GO:0008840">
    <property type="term" value="F:4-hydroxy-tetrahydrodipicolinate synthase activity"/>
    <property type="evidence" value="ECO:0007669"/>
    <property type="project" value="UniProtKB-UniRule"/>
</dbReference>
<dbReference type="GO" id="GO:0019877">
    <property type="term" value="P:diaminopimelate biosynthetic process"/>
    <property type="evidence" value="ECO:0007669"/>
    <property type="project" value="UniProtKB-UniRule"/>
</dbReference>
<dbReference type="GO" id="GO:0009089">
    <property type="term" value="P:lysine biosynthetic process via diaminopimelate"/>
    <property type="evidence" value="ECO:0007669"/>
    <property type="project" value="UniProtKB-UniRule"/>
</dbReference>
<dbReference type="CDD" id="cd00950">
    <property type="entry name" value="DHDPS"/>
    <property type="match status" value="1"/>
</dbReference>
<dbReference type="Gene3D" id="3.20.20.70">
    <property type="entry name" value="Aldolase class I"/>
    <property type="match status" value="1"/>
</dbReference>
<dbReference type="HAMAP" id="MF_00418">
    <property type="entry name" value="DapA"/>
    <property type="match status" value="1"/>
</dbReference>
<dbReference type="InterPro" id="IPR013785">
    <property type="entry name" value="Aldolase_TIM"/>
</dbReference>
<dbReference type="InterPro" id="IPR005263">
    <property type="entry name" value="DapA"/>
</dbReference>
<dbReference type="InterPro" id="IPR002220">
    <property type="entry name" value="DapA-like"/>
</dbReference>
<dbReference type="InterPro" id="IPR020625">
    <property type="entry name" value="Schiff_base-form_aldolases_AS"/>
</dbReference>
<dbReference type="InterPro" id="IPR020624">
    <property type="entry name" value="Schiff_base-form_aldolases_CS"/>
</dbReference>
<dbReference type="NCBIfam" id="TIGR00674">
    <property type="entry name" value="dapA"/>
    <property type="match status" value="1"/>
</dbReference>
<dbReference type="PANTHER" id="PTHR12128:SF66">
    <property type="entry name" value="4-HYDROXY-2-OXOGLUTARATE ALDOLASE, MITOCHONDRIAL"/>
    <property type="match status" value="1"/>
</dbReference>
<dbReference type="PANTHER" id="PTHR12128">
    <property type="entry name" value="DIHYDRODIPICOLINATE SYNTHASE"/>
    <property type="match status" value="1"/>
</dbReference>
<dbReference type="Pfam" id="PF00701">
    <property type="entry name" value="DHDPS"/>
    <property type="match status" value="1"/>
</dbReference>
<dbReference type="PIRSF" id="PIRSF001365">
    <property type="entry name" value="DHDPS"/>
    <property type="match status" value="1"/>
</dbReference>
<dbReference type="PRINTS" id="PR00146">
    <property type="entry name" value="DHPICSNTHASE"/>
</dbReference>
<dbReference type="SMART" id="SM01130">
    <property type="entry name" value="DHDPS"/>
    <property type="match status" value="1"/>
</dbReference>
<dbReference type="SUPFAM" id="SSF51569">
    <property type="entry name" value="Aldolase"/>
    <property type="match status" value="1"/>
</dbReference>
<dbReference type="PROSITE" id="PS00665">
    <property type="entry name" value="DHDPS_1"/>
    <property type="match status" value="1"/>
</dbReference>
<dbReference type="PROSITE" id="PS00666">
    <property type="entry name" value="DHDPS_2"/>
    <property type="match status" value="1"/>
</dbReference>
<gene>
    <name evidence="1" type="primary">dapA</name>
    <name type="ordered locus">Rsph17025_0124</name>
</gene>
<reference key="1">
    <citation type="submission" date="2007-04" db="EMBL/GenBank/DDBJ databases">
        <title>Complete sequence of chromosome of Rhodobacter sphaeroides ATCC 17025.</title>
        <authorList>
            <consortium name="US DOE Joint Genome Institute"/>
            <person name="Copeland A."/>
            <person name="Lucas S."/>
            <person name="Lapidus A."/>
            <person name="Barry K."/>
            <person name="Detter J.C."/>
            <person name="Glavina del Rio T."/>
            <person name="Hammon N."/>
            <person name="Israni S."/>
            <person name="Dalin E."/>
            <person name="Tice H."/>
            <person name="Pitluck S."/>
            <person name="Chertkov O."/>
            <person name="Brettin T."/>
            <person name="Bruce D."/>
            <person name="Han C."/>
            <person name="Schmutz J."/>
            <person name="Larimer F."/>
            <person name="Land M."/>
            <person name="Hauser L."/>
            <person name="Kyrpides N."/>
            <person name="Kim E."/>
            <person name="Richardson P."/>
            <person name="Mackenzie C."/>
            <person name="Choudhary M."/>
            <person name="Donohue T.J."/>
            <person name="Kaplan S."/>
        </authorList>
    </citation>
    <scope>NUCLEOTIDE SEQUENCE [LARGE SCALE GENOMIC DNA]</scope>
    <source>
        <strain>ATCC 17025 / ATH 2.4.3</strain>
    </source>
</reference>
<comment type="function">
    <text evidence="1">Catalyzes the condensation of (S)-aspartate-beta-semialdehyde [(S)-ASA] and pyruvate to 4-hydroxy-tetrahydrodipicolinate (HTPA).</text>
</comment>
<comment type="catalytic activity">
    <reaction evidence="1">
        <text>L-aspartate 4-semialdehyde + pyruvate = (2S,4S)-4-hydroxy-2,3,4,5-tetrahydrodipicolinate + H2O + H(+)</text>
        <dbReference type="Rhea" id="RHEA:34171"/>
        <dbReference type="ChEBI" id="CHEBI:15361"/>
        <dbReference type="ChEBI" id="CHEBI:15377"/>
        <dbReference type="ChEBI" id="CHEBI:15378"/>
        <dbReference type="ChEBI" id="CHEBI:67139"/>
        <dbReference type="ChEBI" id="CHEBI:537519"/>
        <dbReference type="EC" id="4.3.3.7"/>
    </reaction>
</comment>
<comment type="pathway">
    <text evidence="1">Amino-acid biosynthesis; L-lysine biosynthesis via DAP pathway; (S)-tetrahydrodipicolinate from L-aspartate: step 3/4.</text>
</comment>
<comment type="subunit">
    <text evidence="1">Homotetramer; dimer of dimers.</text>
</comment>
<comment type="subcellular location">
    <subcellularLocation>
        <location evidence="1">Cytoplasm</location>
    </subcellularLocation>
</comment>
<comment type="similarity">
    <text evidence="1">Belongs to the DapA family.</text>
</comment>
<comment type="caution">
    <text evidence="2">Was originally thought to be a dihydrodipicolinate synthase (DHDPS), catalyzing the condensation of (S)-aspartate-beta-semialdehyde [(S)-ASA] and pyruvate to dihydrodipicolinate (DHDP). However, it was shown in E.coli that the product of the enzymatic reaction is not dihydrodipicolinate but in fact (4S)-4-hydroxy-2,3,4,5-tetrahydro-(2S)-dipicolinic acid (HTPA), and that the consecutive dehydration reaction leading to DHDP is not spontaneous but catalyzed by DapB.</text>
</comment>
<protein>
    <recommendedName>
        <fullName evidence="1">4-hydroxy-tetrahydrodipicolinate synthase</fullName>
        <shortName evidence="1">HTPA synthase</shortName>
        <ecNumber evidence="1">4.3.3.7</ecNumber>
    </recommendedName>
</protein>
<name>DAPA_CERS5</name>